<accession>A6X0A5</accession>
<dbReference type="EMBL" id="CP000758">
    <property type="protein sequence ID" value="ABS14659.1"/>
    <property type="molecule type" value="Genomic_DNA"/>
</dbReference>
<dbReference type="RefSeq" id="WP_010659903.1">
    <property type="nucleotide sequence ID" value="NC_009667.1"/>
</dbReference>
<dbReference type="SMR" id="A6X0A5"/>
<dbReference type="STRING" id="439375.Oant_1943"/>
<dbReference type="GeneID" id="61317598"/>
<dbReference type="KEGG" id="oan:Oant_1943"/>
<dbReference type="eggNOG" id="COG0080">
    <property type="taxonomic scope" value="Bacteria"/>
</dbReference>
<dbReference type="HOGENOM" id="CLU_074237_2_0_5"/>
<dbReference type="PhylomeDB" id="A6X0A5"/>
<dbReference type="Proteomes" id="UP000002301">
    <property type="component" value="Chromosome 1"/>
</dbReference>
<dbReference type="GO" id="GO:0022625">
    <property type="term" value="C:cytosolic large ribosomal subunit"/>
    <property type="evidence" value="ECO:0007669"/>
    <property type="project" value="TreeGrafter"/>
</dbReference>
<dbReference type="GO" id="GO:0070180">
    <property type="term" value="F:large ribosomal subunit rRNA binding"/>
    <property type="evidence" value="ECO:0007669"/>
    <property type="project" value="UniProtKB-UniRule"/>
</dbReference>
<dbReference type="GO" id="GO:0003735">
    <property type="term" value="F:structural constituent of ribosome"/>
    <property type="evidence" value="ECO:0007669"/>
    <property type="project" value="InterPro"/>
</dbReference>
<dbReference type="GO" id="GO:0006412">
    <property type="term" value="P:translation"/>
    <property type="evidence" value="ECO:0007669"/>
    <property type="project" value="UniProtKB-UniRule"/>
</dbReference>
<dbReference type="CDD" id="cd00349">
    <property type="entry name" value="Ribosomal_L11"/>
    <property type="match status" value="1"/>
</dbReference>
<dbReference type="FunFam" id="1.10.10.250:FF:000001">
    <property type="entry name" value="50S ribosomal protein L11"/>
    <property type="match status" value="1"/>
</dbReference>
<dbReference type="FunFam" id="3.30.1550.10:FF:000001">
    <property type="entry name" value="50S ribosomal protein L11"/>
    <property type="match status" value="1"/>
</dbReference>
<dbReference type="Gene3D" id="1.10.10.250">
    <property type="entry name" value="Ribosomal protein L11, C-terminal domain"/>
    <property type="match status" value="1"/>
</dbReference>
<dbReference type="Gene3D" id="3.30.1550.10">
    <property type="entry name" value="Ribosomal protein L11/L12, N-terminal domain"/>
    <property type="match status" value="1"/>
</dbReference>
<dbReference type="HAMAP" id="MF_00736">
    <property type="entry name" value="Ribosomal_uL11"/>
    <property type="match status" value="1"/>
</dbReference>
<dbReference type="InterPro" id="IPR000911">
    <property type="entry name" value="Ribosomal_uL11"/>
</dbReference>
<dbReference type="InterPro" id="IPR006519">
    <property type="entry name" value="Ribosomal_uL11_bac-typ"/>
</dbReference>
<dbReference type="InterPro" id="IPR020783">
    <property type="entry name" value="Ribosomal_uL11_C"/>
</dbReference>
<dbReference type="InterPro" id="IPR036769">
    <property type="entry name" value="Ribosomal_uL11_C_sf"/>
</dbReference>
<dbReference type="InterPro" id="IPR020785">
    <property type="entry name" value="Ribosomal_uL11_CS"/>
</dbReference>
<dbReference type="InterPro" id="IPR020784">
    <property type="entry name" value="Ribosomal_uL11_N"/>
</dbReference>
<dbReference type="InterPro" id="IPR036796">
    <property type="entry name" value="Ribosomal_uL11_N_sf"/>
</dbReference>
<dbReference type="NCBIfam" id="TIGR01632">
    <property type="entry name" value="L11_bact"/>
    <property type="match status" value="1"/>
</dbReference>
<dbReference type="PANTHER" id="PTHR11661">
    <property type="entry name" value="60S RIBOSOMAL PROTEIN L12"/>
    <property type="match status" value="1"/>
</dbReference>
<dbReference type="PANTHER" id="PTHR11661:SF1">
    <property type="entry name" value="LARGE RIBOSOMAL SUBUNIT PROTEIN UL11M"/>
    <property type="match status" value="1"/>
</dbReference>
<dbReference type="Pfam" id="PF00298">
    <property type="entry name" value="Ribosomal_L11"/>
    <property type="match status" value="1"/>
</dbReference>
<dbReference type="Pfam" id="PF03946">
    <property type="entry name" value="Ribosomal_L11_N"/>
    <property type="match status" value="1"/>
</dbReference>
<dbReference type="SMART" id="SM00649">
    <property type="entry name" value="RL11"/>
    <property type="match status" value="1"/>
</dbReference>
<dbReference type="SUPFAM" id="SSF54747">
    <property type="entry name" value="Ribosomal L11/L12e N-terminal domain"/>
    <property type="match status" value="1"/>
</dbReference>
<dbReference type="SUPFAM" id="SSF46906">
    <property type="entry name" value="Ribosomal protein L11, C-terminal domain"/>
    <property type="match status" value="1"/>
</dbReference>
<dbReference type="PROSITE" id="PS00359">
    <property type="entry name" value="RIBOSOMAL_L11"/>
    <property type="match status" value="1"/>
</dbReference>
<organism>
    <name type="scientific">Brucella anthropi (strain ATCC 49188 / DSM 6882 / CCUG 24695 / JCM 21032 / LMG 3331 / NBRC 15819 / NCTC 12168 / Alc 37)</name>
    <name type="common">Ochrobactrum anthropi</name>
    <dbReference type="NCBI Taxonomy" id="439375"/>
    <lineage>
        <taxon>Bacteria</taxon>
        <taxon>Pseudomonadati</taxon>
        <taxon>Pseudomonadota</taxon>
        <taxon>Alphaproteobacteria</taxon>
        <taxon>Hyphomicrobiales</taxon>
        <taxon>Brucellaceae</taxon>
        <taxon>Brucella/Ochrobactrum group</taxon>
        <taxon>Brucella</taxon>
    </lineage>
</organism>
<evidence type="ECO:0000255" key="1">
    <source>
        <dbReference type="HAMAP-Rule" id="MF_00736"/>
    </source>
</evidence>
<evidence type="ECO:0000305" key="2"/>
<protein>
    <recommendedName>
        <fullName evidence="1">Large ribosomal subunit protein uL11</fullName>
    </recommendedName>
    <alternativeName>
        <fullName evidence="2">50S ribosomal protein L11</fullName>
    </alternativeName>
</protein>
<proteinExistence type="inferred from homology"/>
<feature type="chain" id="PRO_1000046231" description="Large ribosomal subunit protein uL11">
    <location>
        <begin position="1"/>
        <end position="142"/>
    </location>
</feature>
<comment type="function">
    <text evidence="1">Forms part of the ribosomal stalk which helps the ribosome interact with GTP-bound translation factors.</text>
</comment>
<comment type="subunit">
    <text evidence="1">Part of the ribosomal stalk of the 50S ribosomal subunit. Interacts with L10 and the large rRNA to form the base of the stalk. L10 forms an elongated spine to which L12 dimers bind in a sequential fashion forming a multimeric L10(L12)X complex.</text>
</comment>
<comment type="PTM">
    <text evidence="1">One or more lysine residues are methylated.</text>
</comment>
<comment type="similarity">
    <text evidence="1">Belongs to the universal ribosomal protein uL11 family.</text>
</comment>
<sequence>MAKKIAGQLKLQVAAGAANPSPPIGPALGQRGINIMEFCKAFNAASQEMEKGSPIPVVITYYQDKSFTFVMKTPPVTYFLKKAANLKSGSKTPGKASAGTISRDKVRTIAEAKMKDLNAADIEAAMRMIEGSARSMGLEVVG</sequence>
<keyword id="KW-0488">Methylation</keyword>
<keyword id="KW-1185">Reference proteome</keyword>
<keyword id="KW-0687">Ribonucleoprotein</keyword>
<keyword id="KW-0689">Ribosomal protein</keyword>
<keyword id="KW-0694">RNA-binding</keyword>
<keyword id="KW-0699">rRNA-binding</keyword>
<gene>
    <name evidence="1" type="primary">rplK</name>
    <name type="ordered locus">Oant_1943</name>
</gene>
<name>RL11_BRUA4</name>
<reference key="1">
    <citation type="journal article" date="2011" name="J. Bacteriol.">
        <title>Genome of Ochrobactrum anthropi ATCC 49188 T, a versatile opportunistic pathogen and symbiont of several eukaryotic hosts.</title>
        <authorList>
            <person name="Chain P.S."/>
            <person name="Lang D.M."/>
            <person name="Comerci D.J."/>
            <person name="Malfatti S.A."/>
            <person name="Vergez L.M."/>
            <person name="Shin M."/>
            <person name="Ugalde R.A."/>
            <person name="Garcia E."/>
            <person name="Tolmasky M.E."/>
        </authorList>
    </citation>
    <scope>NUCLEOTIDE SEQUENCE [LARGE SCALE GENOMIC DNA]</scope>
    <source>
        <strain>ATCC 49188 / DSM 6882 / CCUG 24695 / JCM 21032 / LMG 3331 / NBRC 15819 / NCTC 12168 / Alc 37</strain>
    </source>
</reference>